<accession>P37541</accession>
<proteinExistence type="predicted"/>
<sequence length="275" mass="31219">MYNVIGVRFKKAGKIYYFDPNGFHIEHDSCVIVETVRGVEYGQVVIANKQVDEHDVVLPLRKVIRVADDRDLLIVEENKQEALSAFDICQKKVIEHGLDMKLVDVEFTFDRNKVIFYFTADGRVDFRELVKDLASIFKTRIELRQIGVRDEAKMLGGIGPCGRMLCCSTFLGDFEPVSIKMAKDQNLSLNPTKISGLCGRLMCCLKYENDEYETAKEQLPDIGEMITTANGPAKVVGLNILERVLQVELINREKVIEYTWEELLEEGVVSAQTTD</sequence>
<comment type="function">
    <text evidence="2">Essential for the phosphorelay during initiation of sporulation. May control the level of phosphorylated spo0A through spo0E activity during sporulation.</text>
</comment>
<comment type="subcellular location">
    <subcellularLocation>
        <location>Cytoplasm</location>
    </subcellularLocation>
    <text>In the vegetative phase, localized throughout the periphery of the cell and the division septum. In the sporulation stages, fluorescence of the YaaT-GFP fusion protein was observed as two dots at the sides of an asymmetric septum and at the edges of the forespore.</text>
</comment>
<gene>
    <name type="primary">yaaT</name>
    <name type="ordered locus">BSU00320</name>
</gene>
<keyword id="KW-0963">Cytoplasm</keyword>
<keyword id="KW-1185">Reference proteome</keyword>
<keyword id="KW-0749">Sporulation</keyword>
<name>YAAT_BACSU</name>
<feature type="chain" id="PRO_0000049437" description="Stage 0 sporulation protein YaaT">
    <location>
        <begin position="1"/>
        <end position="275"/>
    </location>
</feature>
<feature type="domain" description="PSP1 C-terminal" evidence="1">
    <location>
        <begin position="61"/>
        <end position="146"/>
    </location>
</feature>
<reference key="1">
    <citation type="journal article" date="1994" name="DNA Res.">
        <title>Systematic sequencing of the 180 kilobase region of the Bacillus subtilis chromosome containing the replication origin.</title>
        <authorList>
            <person name="Ogasawara N."/>
            <person name="Nakai S."/>
            <person name="Yoshikawa H."/>
        </authorList>
    </citation>
    <scope>NUCLEOTIDE SEQUENCE [GENOMIC DNA]</scope>
    <source>
        <strain>168</strain>
    </source>
</reference>
<reference key="2">
    <citation type="journal article" date="1997" name="Nature">
        <title>The complete genome sequence of the Gram-positive bacterium Bacillus subtilis.</title>
        <authorList>
            <person name="Kunst F."/>
            <person name="Ogasawara N."/>
            <person name="Moszer I."/>
            <person name="Albertini A.M."/>
            <person name="Alloni G."/>
            <person name="Azevedo V."/>
            <person name="Bertero M.G."/>
            <person name="Bessieres P."/>
            <person name="Bolotin A."/>
            <person name="Borchert S."/>
            <person name="Borriss R."/>
            <person name="Boursier L."/>
            <person name="Brans A."/>
            <person name="Braun M."/>
            <person name="Brignell S.C."/>
            <person name="Bron S."/>
            <person name="Brouillet S."/>
            <person name="Bruschi C.V."/>
            <person name="Caldwell B."/>
            <person name="Capuano V."/>
            <person name="Carter N.M."/>
            <person name="Choi S.-K."/>
            <person name="Codani J.-J."/>
            <person name="Connerton I.F."/>
            <person name="Cummings N.J."/>
            <person name="Daniel R.A."/>
            <person name="Denizot F."/>
            <person name="Devine K.M."/>
            <person name="Duesterhoeft A."/>
            <person name="Ehrlich S.D."/>
            <person name="Emmerson P.T."/>
            <person name="Entian K.-D."/>
            <person name="Errington J."/>
            <person name="Fabret C."/>
            <person name="Ferrari E."/>
            <person name="Foulger D."/>
            <person name="Fritz C."/>
            <person name="Fujita M."/>
            <person name="Fujita Y."/>
            <person name="Fuma S."/>
            <person name="Galizzi A."/>
            <person name="Galleron N."/>
            <person name="Ghim S.-Y."/>
            <person name="Glaser P."/>
            <person name="Goffeau A."/>
            <person name="Golightly E.J."/>
            <person name="Grandi G."/>
            <person name="Guiseppi G."/>
            <person name="Guy B.J."/>
            <person name="Haga K."/>
            <person name="Haiech J."/>
            <person name="Harwood C.R."/>
            <person name="Henaut A."/>
            <person name="Hilbert H."/>
            <person name="Holsappel S."/>
            <person name="Hosono S."/>
            <person name="Hullo M.-F."/>
            <person name="Itaya M."/>
            <person name="Jones L.-M."/>
            <person name="Joris B."/>
            <person name="Karamata D."/>
            <person name="Kasahara Y."/>
            <person name="Klaerr-Blanchard M."/>
            <person name="Klein C."/>
            <person name="Kobayashi Y."/>
            <person name="Koetter P."/>
            <person name="Koningstein G."/>
            <person name="Krogh S."/>
            <person name="Kumano M."/>
            <person name="Kurita K."/>
            <person name="Lapidus A."/>
            <person name="Lardinois S."/>
            <person name="Lauber J."/>
            <person name="Lazarevic V."/>
            <person name="Lee S.-M."/>
            <person name="Levine A."/>
            <person name="Liu H."/>
            <person name="Masuda S."/>
            <person name="Mauel C."/>
            <person name="Medigue C."/>
            <person name="Medina N."/>
            <person name="Mellado R.P."/>
            <person name="Mizuno M."/>
            <person name="Moestl D."/>
            <person name="Nakai S."/>
            <person name="Noback M."/>
            <person name="Noone D."/>
            <person name="O'Reilly M."/>
            <person name="Ogawa K."/>
            <person name="Ogiwara A."/>
            <person name="Oudega B."/>
            <person name="Park S.-H."/>
            <person name="Parro V."/>
            <person name="Pohl T.M."/>
            <person name="Portetelle D."/>
            <person name="Porwollik S."/>
            <person name="Prescott A.M."/>
            <person name="Presecan E."/>
            <person name="Pujic P."/>
            <person name="Purnelle B."/>
            <person name="Rapoport G."/>
            <person name="Rey M."/>
            <person name="Reynolds S."/>
            <person name="Rieger M."/>
            <person name="Rivolta C."/>
            <person name="Rocha E."/>
            <person name="Roche B."/>
            <person name="Rose M."/>
            <person name="Sadaie Y."/>
            <person name="Sato T."/>
            <person name="Scanlan E."/>
            <person name="Schleich S."/>
            <person name="Schroeter R."/>
            <person name="Scoffone F."/>
            <person name="Sekiguchi J."/>
            <person name="Sekowska A."/>
            <person name="Seror S.J."/>
            <person name="Serror P."/>
            <person name="Shin B.-S."/>
            <person name="Soldo B."/>
            <person name="Sorokin A."/>
            <person name="Tacconi E."/>
            <person name="Takagi T."/>
            <person name="Takahashi H."/>
            <person name="Takemaru K."/>
            <person name="Takeuchi M."/>
            <person name="Tamakoshi A."/>
            <person name="Tanaka T."/>
            <person name="Terpstra P."/>
            <person name="Tognoni A."/>
            <person name="Tosato V."/>
            <person name="Uchiyama S."/>
            <person name="Vandenbol M."/>
            <person name="Vannier F."/>
            <person name="Vassarotti A."/>
            <person name="Viari A."/>
            <person name="Wambutt R."/>
            <person name="Wedler E."/>
            <person name="Wedler H."/>
            <person name="Weitzenegger T."/>
            <person name="Winters P."/>
            <person name="Wipat A."/>
            <person name="Yamamoto H."/>
            <person name="Yamane K."/>
            <person name="Yasumoto K."/>
            <person name="Yata K."/>
            <person name="Yoshida K."/>
            <person name="Yoshikawa H.-F."/>
            <person name="Zumstein E."/>
            <person name="Yoshikawa H."/>
            <person name="Danchin A."/>
        </authorList>
    </citation>
    <scope>NUCLEOTIDE SEQUENCE [LARGE SCALE GENOMIC DNA]</scope>
    <source>
        <strain>168</strain>
    </source>
</reference>
<reference key="3">
    <citation type="journal article" date="2002" name="J. Bacteriol.">
        <title>Mutation in yaaT leads to significant inhibition of phosphorelay during sporulation in Bacillus subtilis.</title>
        <authorList>
            <person name="Hosoya S."/>
            <person name="Asai K."/>
            <person name="Ogasawara N."/>
            <person name="Takeuchi M."/>
            <person name="Sato T."/>
        </authorList>
    </citation>
    <scope>ROLE IN SPORULATION</scope>
    <source>
        <strain>168</strain>
    </source>
</reference>
<evidence type="ECO:0000255" key="1">
    <source>
        <dbReference type="PROSITE-ProRule" id="PRU00744"/>
    </source>
</evidence>
<evidence type="ECO:0000269" key="2">
    <source>
    </source>
</evidence>
<organism>
    <name type="scientific">Bacillus subtilis (strain 168)</name>
    <dbReference type="NCBI Taxonomy" id="224308"/>
    <lineage>
        <taxon>Bacteria</taxon>
        <taxon>Bacillati</taxon>
        <taxon>Bacillota</taxon>
        <taxon>Bacilli</taxon>
        <taxon>Bacillales</taxon>
        <taxon>Bacillaceae</taxon>
        <taxon>Bacillus</taxon>
    </lineage>
</organism>
<protein>
    <recommendedName>
        <fullName>Stage 0 sporulation protein YaaT</fullName>
    </recommendedName>
</protein>
<dbReference type="EMBL" id="D26185">
    <property type="protein sequence ID" value="BAA05268.1"/>
    <property type="molecule type" value="Genomic_DNA"/>
</dbReference>
<dbReference type="EMBL" id="AL009126">
    <property type="protein sequence ID" value="CAB11808.1"/>
    <property type="molecule type" value="Genomic_DNA"/>
</dbReference>
<dbReference type="PIR" id="S66062">
    <property type="entry name" value="S66062"/>
</dbReference>
<dbReference type="FunCoup" id="P37541">
    <property type="interactions" value="47"/>
</dbReference>
<dbReference type="IntAct" id="P37541">
    <property type="interactions" value="1"/>
</dbReference>
<dbReference type="STRING" id="224308.BSU00320"/>
<dbReference type="PaxDb" id="224308-BSU00320"/>
<dbReference type="EnsemblBacteria" id="CAB11808">
    <property type="protein sequence ID" value="CAB11808"/>
    <property type="gene ID" value="BSU_00320"/>
</dbReference>
<dbReference type="GeneID" id="937012"/>
<dbReference type="KEGG" id="bsu:BSU00320"/>
<dbReference type="PATRIC" id="fig|224308.179.peg.32"/>
<dbReference type="eggNOG" id="COG1774">
    <property type="taxonomic scope" value="Bacteria"/>
</dbReference>
<dbReference type="InParanoid" id="P37541"/>
<dbReference type="OrthoDB" id="9779344at2"/>
<dbReference type="PhylomeDB" id="P37541"/>
<dbReference type="BioCyc" id="BSUB:BSU00320-MONOMER"/>
<dbReference type="Proteomes" id="UP000001570">
    <property type="component" value="Chromosome"/>
</dbReference>
<dbReference type="GO" id="GO:0005737">
    <property type="term" value="C:cytoplasm"/>
    <property type="evidence" value="ECO:0000318"/>
    <property type="project" value="GO_Central"/>
</dbReference>
<dbReference type="GO" id="GO:0003729">
    <property type="term" value="F:mRNA binding"/>
    <property type="evidence" value="ECO:0000318"/>
    <property type="project" value="GO_Central"/>
</dbReference>
<dbReference type="GO" id="GO:0030435">
    <property type="term" value="P:sporulation resulting in formation of a cellular spore"/>
    <property type="evidence" value="ECO:0007669"/>
    <property type="project" value="UniProtKB-KW"/>
</dbReference>
<dbReference type="InterPro" id="IPR047767">
    <property type="entry name" value="PSP1-like"/>
</dbReference>
<dbReference type="InterPro" id="IPR007557">
    <property type="entry name" value="PSP1_C"/>
</dbReference>
<dbReference type="NCBIfam" id="NF041131">
    <property type="entry name" value="RicT_YaaT_fam"/>
    <property type="match status" value="1"/>
</dbReference>
<dbReference type="PANTHER" id="PTHR43830">
    <property type="entry name" value="PROTEIN PSP1"/>
    <property type="match status" value="1"/>
</dbReference>
<dbReference type="PANTHER" id="PTHR43830:SF3">
    <property type="entry name" value="PROTEIN PSP1"/>
    <property type="match status" value="1"/>
</dbReference>
<dbReference type="Pfam" id="PF04468">
    <property type="entry name" value="PSP1"/>
    <property type="match status" value="1"/>
</dbReference>
<dbReference type="PROSITE" id="PS51411">
    <property type="entry name" value="PSP1_C"/>
    <property type="match status" value="1"/>
</dbReference>